<sequence>MSPQIKLYLNPPKNNQYYSNHDHISGSVSVDFGKPVSIKQINVSFKGFIETMTKIDPVVMRNQAALMSPMQDAKTIHTLVNIGQKVFPPENVLSAIEGDLKPFQLKEGVHEYEFQLPKVPKKPKCLSSHTKGLMTYLDKDRVRLPPSFNNDWKNMLRFDNLDLFFYSFGKILYMVEVQIELGKPKSWYRPFEKVLTEIQLVEFIPQSKDLTFKLDDKPSKEVLESFKNSNGEQEEKTSNKLQTEKATVPTNAPLVDVMTQKPDVRVYRSTYKIGLPDDDSVMWLEARSPNLRRTFRGDPIFAGGSGKFDDIYIVMMGDKALIDRLRVIPTRVQLNLLETVTYLSQGVANQNVSSLKLAEDRIPLEKRSTVLKNSWGRYVQFSSSNPNQCKWECELRLKNHPNLKKLKFNEEDYRHRGNRLYSFKSCSIKRIFSFQLLVDWDIVGFKRQSEIIVDPIQVFADRNGRNQEEALPLYVPPPSYTESTQY</sequence>
<feature type="chain" id="PRO_0000402200" description="Arrestin-related trafficking adapter 10">
    <location>
        <begin position="1"/>
        <end position="486"/>
    </location>
</feature>
<comment type="function">
    <text evidence="1">May regulate endocytosis by recruiting RSP5 ubiquitin ligase activity to specific plasma membrane proteins in response to extracellular stimuli.</text>
</comment>
<comment type="subcellular location">
    <subcellularLocation>
        <location evidence="1">Cytoplasm</location>
    </subcellularLocation>
</comment>
<comment type="similarity">
    <text evidence="2">Belongs to the ART10 family.</text>
</comment>
<accession>C5DRZ0</accession>
<gene>
    <name type="primary">ART10</name>
    <name type="ordered locus">ZYRO0B12452g</name>
</gene>
<organism>
    <name type="scientific">Zygosaccharomyces rouxii (strain ATCC 2623 / CBS 732 / NBRC 1130 / NCYC 568 / NRRL Y-229)</name>
    <dbReference type="NCBI Taxonomy" id="559307"/>
    <lineage>
        <taxon>Eukaryota</taxon>
        <taxon>Fungi</taxon>
        <taxon>Dikarya</taxon>
        <taxon>Ascomycota</taxon>
        <taxon>Saccharomycotina</taxon>
        <taxon>Saccharomycetes</taxon>
        <taxon>Saccharomycetales</taxon>
        <taxon>Saccharomycetaceae</taxon>
        <taxon>Zygosaccharomyces</taxon>
    </lineage>
</organism>
<reference key="1">
    <citation type="journal article" date="2009" name="Genome Res.">
        <title>Comparative genomics of protoploid Saccharomycetaceae.</title>
        <authorList>
            <consortium name="The Genolevures Consortium"/>
            <person name="Souciet J.-L."/>
            <person name="Dujon B."/>
            <person name="Gaillardin C."/>
            <person name="Johnston M."/>
            <person name="Baret P.V."/>
            <person name="Cliften P."/>
            <person name="Sherman D.J."/>
            <person name="Weissenbach J."/>
            <person name="Westhof E."/>
            <person name="Wincker P."/>
            <person name="Jubin C."/>
            <person name="Poulain J."/>
            <person name="Barbe V."/>
            <person name="Segurens B."/>
            <person name="Artiguenave F."/>
            <person name="Anthouard V."/>
            <person name="Vacherie B."/>
            <person name="Val M.-E."/>
            <person name="Fulton R.S."/>
            <person name="Minx P."/>
            <person name="Wilson R."/>
            <person name="Durrens P."/>
            <person name="Jean G."/>
            <person name="Marck C."/>
            <person name="Martin T."/>
            <person name="Nikolski M."/>
            <person name="Rolland T."/>
            <person name="Seret M.-L."/>
            <person name="Casaregola S."/>
            <person name="Despons L."/>
            <person name="Fairhead C."/>
            <person name="Fischer G."/>
            <person name="Lafontaine I."/>
            <person name="Leh V."/>
            <person name="Lemaire M."/>
            <person name="de Montigny J."/>
            <person name="Neuveglise C."/>
            <person name="Thierry A."/>
            <person name="Blanc-Lenfle I."/>
            <person name="Bleykasten C."/>
            <person name="Diffels J."/>
            <person name="Fritsch E."/>
            <person name="Frangeul L."/>
            <person name="Goeffon A."/>
            <person name="Jauniaux N."/>
            <person name="Kachouri-Lafond R."/>
            <person name="Payen C."/>
            <person name="Potier S."/>
            <person name="Pribylova L."/>
            <person name="Ozanne C."/>
            <person name="Richard G.-F."/>
            <person name="Sacerdot C."/>
            <person name="Straub M.-L."/>
            <person name="Talla E."/>
        </authorList>
    </citation>
    <scope>NUCLEOTIDE SEQUENCE [LARGE SCALE GENOMIC DNA]</scope>
    <source>
        <strain>ATCC 2623 / CBS 732 / BCRC 21506 / NBRC 1130 / NCYC 568 / NRRL Y-229</strain>
    </source>
</reference>
<name>ART10_ZYGRC</name>
<evidence type="ECO:0000250" key="1"/>
<evidence type="ECO:0000305" key="2"/>
<dbReference type="EMBL" id="CU928174">
    <property type="protein sequence ID" value="CAR26551.1"/>
    <property type="molecule type" value="Genomic_DNA"/>
</dbReference>
<dbReference type="RefSeq" id="XP_002495484.1">
    <property type="nucleotide sequence ID" value="XM_002495439.1"/>
</dbReference>
<dbReference type="FunCoup" id="C5DRZ0">
    <property type="interactions" value="53"/>
</dbReference>
<dbReference type="STRING" id="559307.C5DRZ0"/>
<dbReference type="GeneID" id="8202646"/>
<dbReference type="KEGG" id="zro:ZYRO0B12452g"/>
<dbReference type="HOGENOM" id="CLU_540776_0_0_1"/>
<dbReference type="InParanoid" id="C5DRZ0"/>
<dbReference type="Proteomes" id="UP000008536">
    <property type="component" value="Chromosome B"/>
</dbReference>
<dbReference type="GO" id="GO:0005737">
    <property type="term" value="C:cytoplasm"/>
    <property type="evidence" value="ECO:0007669"/>
    <property type="project" value="UniProtKB-SubCell"/>
</dbReference>
<dbReference type="GO" id="GO:0006897">
    <property type="term" value="P:endocytosis"/>
    <property type="evidence" value="ECO:0007669"/>
    <property type="project" value="UniProtKB-KW"/>
</dbReference>
<dbReference type="CDD" id="cd22952">
    <property type="entry name" value="ART10-like"/>
    <property type="match status" value="1"/>
</dbReference>
<dbReference type="Gene3D" id="2.60.40.640">
    <property type="match status" value="1"/>
</dbReference>
<dbReference type="InterPro" id="IPR014752">
    <property type="entry name" value="Arrestin-like_C"/>
</dbReference>
<dbReference type="InterPro" id="IPR011021">
    <property type="entry name" value="Arrestin-like_N"/>
</dbReference>
<dbReference type="Pfam" id="PF00339">
    <property type="entry name" value="Arrestin_N"/>
    <property type="match status" value="1"/>
</dbReference>
<proteinExistence type="inferred from homology"/>
<protein>
    <recommendedName>
        <fullName>Arrestin-related trafficking adapter 10</fullName>
    </recommendedName>
</protein>
<keyword id="KW-0963">Cytoplasm</keyword>
<keyword id="KW-0254">Endocytosis</keyword>
<keyword id="KW-1185">Reference proteome</keyword>